<keyword id="KW-0143">Chaperone</keyword>
<keyword id="KW-0963">Cytoplasm</keyword>
<feature type="chain" id="PRO_1000082383" description="Co-chaperonin GroES">
    <location>
        <begin position="1"/>
        <end position="95"/>
    </location>
</feature>
<evidence type="ECO:0000255" key="1">
    <source>
        <dbReference type="HAMAP-Rule" id="MF_00580"/>
    </source>
</evidence>
<sequence length="95" mass="10187">MTIRPLHDRVVVKRLEAEEKTASGIVLPGAAAEKPDMGEVIAVGAGKIGKDGARRPLDVKVGDKIIFGKYSGQTVKADGEELLVMREEDIFGIVE</sequence>
<proteinExistence type="inferred from homology"/>
<organism>
    <name type="scientific">Neisseria meningitidis serogroup C (strain 053442)</name>
    <dbReference type="NCBI Taxonomy" id="374833"/>
    <lineage>
        <taxon>Bacteria</taxon>
        <taxon>Pseudomonadati</taxon>
        <taxon>Pseudomonadota</taxon>
        <taxon>Betaproteobacteria</taxon>
        <taxon>Neisseriales</taxon>
        <taxon>Neisseriaceae</taxon>
        <taxon>Neisseria</taxon>
    </lineage>
</organism>
<accession>A9M0Q5</accession>
<comment type="function">
    <text evidence="1">Together with the chaperonin GroEL, plays an essential role in assisting protein folding. The GroEL-GroES system forms a nano-cage that allows encapsulation of the non-native substrate proteins and provides a physical environment optimized to promote and accelerate protein folding. GroES binds to the apical surface of the GroEL ring, thereby capping the opening of the GroEL channel.</text>
</comment>
<comment type="subunit">
    <text evidence="1">Heptamer of 7 subunits arranged in a ring. Interacts with the chaperonin GroEL.</text>
</comment>
<comment type="subcellular location">
    <subcellularLocation>
        <location evidence="1">Cytoplasm</location>
    </subcellularLocation>
</comment>
<comment type="similarity">
    <text evidence="1">Belongs to the GroES chaperonin family.</text>
</comment>
<name>CH10_NEIM0</name>
<dbReference type="EMBL" id="CP000381">
    <property type="protein sequence ID" value="ABX72448.1"/>
    <property type="molecule type" value="Genomic_DNA"/>
</dbReference>
<dbReference type="RefSeq" id="WP_002218094.1">
    <property type="nucleotide sequence ID" value="NC_010120.1"/>
</dbReference>
<dbReference type="SMR" id="A9M0Q5"/>
<dbReference type="KEGG" id="nmn:NMCC_0240"/>
<dbReference type="HOGENOM" id="CLU_132825_2_0_4"/>
<dbReference type="Proteomes" id="UP000001177">
    <property type="component" value="Chromosome"/>
</dbReference>
<dbReference type="GO" id="GO:0005737">
    <property type="term" value="C:cytoplasm"/>
    <property type="evidence" value="ECO:0007669"/>
    <property type="project" value="UniProtKB-SubCell"/>
</dbReference>
<dbReference type="GO" id="GO:0005524">
    <property type="term" value="F:ATP binding"/>
    <property type="evidence" value="ECO:0007669"/>
    <property type="project" value="InterPro"/>
</dbReference>
<dbReference type="GO" id="GO:0046872">
    <property type="term" value="F:metal ion binding"/>
    <property type="evidence" value="ECO:0007669"/>
    <property type="project" value="TreeGrafter"/>
</dbReference>
<dbReference type="GO" id="GO:0044183">
    <property type="term" value="F:protein folding chaperone"/>
    <property type="evidence" value="ECO:0007669"/>
    <property type="project" value="InterPro"/>
</dbReference>
<dbReference type="GO" id="GO:0051087">
    <property type="term" value="F:protein-folding chaperone binding"/>
    <property type="evidence" value="ECO:0007669"/>
    <property type="project" value="TreeGrafter"/>
</dbReference>
<dbReference type="GO" id="GO:0051082">
    <property type="term" value="F:unfolded protein binding"/>
    <property type="evidence" value="ECO:0007669"/>
    <property type="project" value="TreeGrafter"/>
</dbReference>
<dbReference type="GO" id="GO:0051085">
    <property type="term" value="P:chaperone cofactor-dependent protein refolding"/>
    <property type="evidence" value="ECO:0007669"/>
    <property type="project" value="TreeGrafter"/>
</dbReference>
<dbReference type="CDD" id="cd00320">
    <property type="entry name" value="cpn10"/>
    <property type="match status" value="1"/>
</dbReference>
<dbReference type="FunFam" id="2.30.33.40:FF:000001">
    <property type="entry name" value="10 kDa chaperonin"/>
    <property type="match status" value="1"/>
</dbReference>
<dbReference type="Gene3D" id="2.30.33.40">
    <property type="entry name" value="GroES chaperonin"/>
    <property type="match status" value="1"/>
</dbReference>
<dbReference type="HAMAP" id="MF_00580">
    <property type="entry name" value="CH10"/>
    <property type="match status" value="1"/>
</dbReference>
<dbReference type="InterPro" id="IPR020818">
    <property type="entry name" value="Chaperonin_GroES"/>
</dbReference>
<dbReference type="InterPro" id="IPR037124">
    <property type="entry name" value="Chaperonin_GroES_sf"/>
</dbReference>
<dbReference type="InterPro" id="IPR018369">
    <property type="entry name" value="Chaprnonin_Cpn10_CS"/>
</dbReference>
<dbReference type="InterPro" id="IPR011032">
    <property type="entry name" value="GroES-like_sf"/>
</dbReference>
<dbReference type="NCBIfam" id="NF001527">
    <property type="entry name" value="PRK00364.1-2"/>
    <property type="match status" value="1"/>
</dbReference>
<dbReference type="NCBIfam" id="NF001531">
    <property type="entry name" value="PRK00364.2-2"/>
    <property type="match status" value="1"/>
</dbReference>
<dbReference type="NCBIfam" id="NF001533">
    <property type="entry name" value="PRK00364.2-4"/>
    <property type="match status" value="1"/>
</dbReference>
<dbReference type="PANTHER" id="PTHR10772">
    <property type="entry name" value="10 KDA HEAT SHOCK PROTEIN"/>
    <property type="match status" value="1"/>
</dbReference>
<dbReference type="PANTHER" id="PTHR10772:SF58">
    <property type="entry name" value="CO-CHAPERONIN GROES"/>
    <property type="match status" value="1"/>
</dbReference>
<dbReference type="Pfam" id="PF00166">
    <property type="entry name" value="Cpn10"/>
    <property type="match status" value="1"/>
</dbReference>
<dbReference type="PRINTS" id="PR00297">
    <property type="entry name" value="CHAPERONIN10"/>
</dbReference>
<dbReference type="SMART" id="SM00883">
    <property type="entry name" value="Cpn10"/>
    <property type="match status" value="1"/>
</dbReference>
<dbReference type="SUPFAM" id="SSF50129">
    <property type="entry name" value="GroES-like"/>
    <property type="match status" value="1"/>
</dbReference>
<dbReference type="PROSITE" id="PS00681">
    <property type="entry name" value="CHAPERONINS_CPN10"/>
    <property type="match status" value="1"/>
</dbReference>
<reference key="1">
    <citation type="journal article" date="2008" name="Genomics">
        <title>Characterization of ST-4821 complex, a unique Neisseria meningitidis clone.</title>
        <authorList>
            <person name="Peng J."/>
            <person name="Yang L."/>
            <person name="Yang F."/>
            <person name="Yang J."/>
            <person name="Yan Y."/>
            <person name="Nie H."/>
            <person name="Zhang X."/>
            <person name="Xiong Z."/>
            <person name="Jiang Y."/>
            <person name="Cheng F."/>
            <person name="Xu X."/>
            <person name="Chen S."/>
            <person name="Sun L."/>
            <person name="Li W."/>
            <person name="Shen Y."/>
            <person name="Shao Z."/>
            <person name="Liang X."/>
            <person name="Xu J."/>
            <person name="Jin Q."/>
        </authorList>
    </citation>
    <scope>NUCLEOTIDE SEQUENCE [LARGE SCALE GENOMIC DNA]</scope>
    <source>
        <strain>053442</strain>
    </source>
</reference>
<gene>
    <name evidence="1" type="primary">groES</name>
    <name evidence="1" type="synonym">groS</name>
    <name type="ordered locus">NMCC_0240</name>
</gene>
<protein>
    <recommendedName>
        <fullName evidence="1">Co-chaperonin GroES</fullName>
    </recommendedName>
    <alternativeName>
        <fullName evidence="1">10 kDa chaperonin</fullName>
    </alternativeName>
    <alternativeName>
        <fullName evidence="1">Chaperonin-10</fullName>
        <shortName evidence="1">Cpn10</shortName>
    </alternativeName>
</protein>